<dbReference type="EMBL" id="AE006470">
    <property type="protein sequence ID" value="AAM72041.1"/>
    <property type="status" value="ALT_INIT"/>
    <property type="molecule type" value="Genomic_DNA"/>
</dbReference>
<dbReference type="RefSeq" id="NP_661699.1">
    <property type="nucleotide sequence ID" value="NC_002932.3"/>
</dbReference>
<dbReference type="RefSeq" id="WP_164926934.1">
    <property type="nucleotide sequence ID" value="NC_002932.3"/>
</dbReference>
<dbReference type="SMR" id="Q8KE85"/>
<dbReference type="STRING" id="194439.CT0805"/>
<dbReference type="EnsemblBacteria" id="AAM72041">
    <property type="protein sequence ID" value="AAM72041"/>
    <property type="gene ID" value="CT0805"/>
</dbReference>
<dbReference type="KEGG" id="cte:CT0805"/>
<dbReference type="PATRIC" id="fig|194439.7.peg.730"/>
<dbReference type="eggNOG" id="COG0718">
    <property type="taxonomic scope" value="Bacteria"/>
</dbReference>
<dbReference type="HOGENOM" id="CLU_140930_0_1_10"/>
<dbReference type="OrthoDB" id="9808738at2"/>
<dbReference type="Proteomes" id="UP000001007">
    <property type="component" value="Chromosome"/>
</dbReference>
<dbReference type="GO" id="GO:0043590">
    <property type="term" value="C:bacterial nucleoid"/>
    <property type="evidence" value="ECO:0007669"/>
    <property type="project" value="UniProtKB-UniRule"/>
</dbReference>
<dbReference type="GO" id="GO:0005829">
    <property type="term" value="C:cytosol"/>
    <property type="evidence" value="ECO:0007669"/>
    <property type="project" value="TreeGrafter"/>
</dbReference>
<dbReference type="GO" id="GO:0003677">
    <property type="term" value="F:DNA binding"/>
    <property type="evidence" value="ECO:0007669"/>
    <property type="project" value="UniProtKB-UniRule"/>
</dbReference>
<dbReference type="Gene3D" id="3.30.1310.10">
    <property type="entry name" value="Nucleoid-associated protein YbaB-like domain"/>
    <property type="match status" value="1"/>
</dbReference>
<dbReference type="HAMAP" id="MF_00274">
    <property type="entry name" value="DNA_YbaB_EbfC"/>
    <property type="match status" value="1"/>
</dbReference>
<dbReference type="InterPro" id="IPR036894">
    <property type="entry name" value="YbaB-like_sf"/>
</dbReference>
<dbReference type="InterPro" id="IPR004401">
    <property type="entry name" value="YbaB/EbfC"/>
</dbReference>
<dbReference type="NCBIfam" id="TIGR00103">
    <property type="entry name" value="DNA_YbaB_EbfC"/>
    <property type="match status" value="1"/>
</dbReference>
<dbReference type="PANTHER" id="PTHR33449">
    <property type="entry name" value="NUCLEOID-ASSOCIATED PROTEIN YBAB"/>
    <property type="match status" value="1"/>
</dbReference>
<dbReference type="PANTHER" id="PTHR33449:SF1">
    <property type="entry name" value="NUCLEOID-ASSOCIATED PROTEIN YBAB"/>
    <property type="match status" value="1"/>
</dbReference>
<dbReference type="Pfam" id="PF02575">
    <property type="entry name" value="YbaB_DNA_bd"/>
    <property type="match status" value="1"/>
</dbReference>
<dbReference type="PIRSF" id="PIRSF004555">
    <property type="entry name" value="UCP004555"/>
    <property type="match status" value="1"/>
</dbReference>
<dbReference type="SUPFAM" id="SSF82607">
    <property type="entry name" value="YbaB-like"/>
    <property type="match status" value="1"/>
</dbReference>
<reference key="1">
    <citation type="journal article" date="2002" name="Proc. Natl. Acad. Sci. U.S.A.">
        <title>The complete genome sequence of Chlorobium tepidum TLS, a photosynthetic, anaerobic, green-sulfur bacterium.</title>
        <authorList>
            <person name="Eisen J.A."/>
            <person name="Nelson K.E."/>
            <person name="Paulsen I.T."/>
            <person name="Heidelberg J.F."/>
            <person name="Wu M."/>
            <person name="Dodson R.J."/>
            <person name="DeBoy R.T."/>
            <person name="Gwinn M.L."/>
            <person name="Nelson W.C."/>
            <person name="Haft D.H."/>
            <person name="Hickey E.K."/>
            <person name="Peterson J.D."/>
            <person name="Durkin A.S."/>
            <person name="Kolonay J.F."/>
            <person name="Yang F."/>
            <person name="Holt I.E."/>
            <person name="Umayam L.A."/>
            <person name="Mason T.M."/>
            <person name="Brenner M."/>
            <person name="Shea T.P."/>
            <person name="Parksey D.S."/>
            <person name="Nierman W.C."/>
            <person name="Feldblyum T.V."/>
            <person name="Hansen C.L."/>
            <person name="Craven M.B."/>
            <person name="Radune D."/>
            <person name="Vamathevan J.J."/>
            <person name="Khouri H.M."/>
            <person name="White O."/>
            <person name="Gruber T.M."/>
            <person name="Ketchum K.A."/>
            <person name="Venter J.C."/>
            <person name="Tettelin H."/>
            <person name="Bryant D.A."/>
            <person name="Fraser C.M."/>
        </authorList>
    </citation>
    <scope>NUCLEOTIDE SEQUENCE [LARGE SCALE GENOMIC DNA]</scope>
    <source>
        <strain>ATCC 49652 / DSM 12025 / NBRC 103806 / TLS</strain>
    </source>
</reference>
<name>Y805_CHLTE</name>
<keyword id="KW-0963">Cytoplasm</keyword>
<keyword id="KW-0238">DNA-binding</keyword>
<keyword id="KW-1185">Reference proteome</keyword>
<gene>
    <name type="ordered locus">CT0805</name>
</gene>
<feature type="chain" id="PRO_0000170381" description="Nucleoid-associated protein CT0805">
    <location>
        <begin position="1"/>
        <end position="111"/>
    </location>
</feature>
<evidence type="ECO:0000255" key="1">
    <source>
        <dbReference type="HAMAP-Rule" id="MF_00274"/>
    </source>
</evidence>
<evidence type="ECO:0000305" key="2"/>
<protein>
    <recommendedName>
        <fullName evidence="1">Nucleoid-associated protein CT0805</fullName>
    </recommendedName>
</protein>
<organism>
    <name type="scientific">Chlorobaculum tepidum (strain ATCC 49652 / DSM 12025 / NBRC 103806 / TLS)</name>
    <name type="common">Chlorobium tepidum</name>
    <dbReference type="NCBI Taxonomy" id="194439"/>
    <lineage>
        <taxon>Bacteria</taxon>
        <taxon>Pseudomonadati</taxon>
        <taxon>Chlorobiota</taxon>
        <taxon>Chlorobiia</taxon>
        <taxon>Chlorobiales</taxon>
        <taxon>Chlorobiaceae</taxon>
        <taxon>Chlorobaculum</taxon>
    </lineage>
</organism>
<comment type="function">
    <text evidence="1">Binds to DNA and alters its conformation. May be involved in regulation of gene expression, nucleoid organization and DNA protection.</text>
</comment>
<comment type="subunit">
    <text evidence="1">Homodimer.</text>
</comment>
<comment type="subcellular location">
    <subcellularLocation>
        <location evidence="1">Cytoplasm</location>
        <location evidence="1">Nucleoid</location>
    </subcellularLocation>
</comment>
<comment type="similarity">
    <text evidence="1">Belongs to the YbaB/EbfC family.</text>
</comment>
<comment type="sequence caution" evidence="2">
    <conflict type="erroneous initiation">
        <sequence resource="EMBL-CDS" id="AAM72041"/>
    </conflict>
</comment>
<sequence length="111" mass="11862">MAMPNFGDMMKQLQEAGAKMQDLQKQLEKLVSEGEAGGGMVRAKVNGRQKLLELTIDPEIMDDVDMVQDLVVAAVNKALEASAQLAQSEIQKAAGGMINPADLMKQFGGQG</sequence>
<accession>Q8KE85</accession>
<proteinExistence type="inferred from homology"/>